<sequence>MSPETETGATSSVPRSLFDKVWDAHQVRAETAETPGLLYIDLHLVHEVTSPQAFSVLAERGLKVRRPDRTLATIDHATPTLDFAAGETPPYATAAAQNQVETLQSNTAQHGITLHGWGSGHRGVVHVIGPELGATQPGMTIVCGDSHTATHGAFGALAFGIGTTEVGHVLASQCLLQRKPKSMRVTVDGETAAGISAKDIILAIIAEIGVDGGTGCVIEYAGSAIEALDMEGRMTVCNMSIEAGARAGMIAPDETTFAWLEGREQVPTGSEWDAAIDRWRALRSDAGARFDHEVMIDAASIRPMVTWGTAPDTGIAVNAPIPQPRSPSHRKALAYMGLEAGMPVAGTQVDQVFIGSCTNSRITDLREAAAIMSGRRVADGIRALVVPGSVAVRAQAEAEGLDRIFTDAGAEWRQPGCSMCIAMNGDRGEPGQLVVSTSNRNFEGRQGPGVRTVLASPATAAAAAIAGHVIDPAELMEPAHA</sequence>
<proteinExistence type="inferred from homology"/>
<dbReference type="EC" id="4.2.1.33" evidence="1"/>
<dbReference type="EMBL" id="CP000449">
    <property type="protein sequence ID" value="ABI64578.1"/>
    <property type="molecule type" value="Genomic_DNA"/>
</dbReference>
<dbReference type="RefSeq" id="WP_011642225.1">
    <property type="nucleotide sequence ID" value="NC_008347.1"/>
</dbReference>
<dbReference type="SMR" id="Q0AT09"/>
<dbReference type="STRING" id="394221.Mmar10_0285"/>
<dbReference type="KEGG" id="mmr:Mmar10_0285"/>
<dbReference type="eggNOG" id="COG0065">
    <property type="taxonomic scope" value="Bacteria"/>
</dbReference>
<dbReference type="HOGENOM" id="CLU_006714_3_4_5"/>
<dbReference type="OrthoDB" id="9802769at2"/>
<dbReference type="UniPathway" id="UPA00048">
    <property type="reaction ID" value="UER00071"/>
</dbReference>
<dbReference type="Proteomes" id="UP000001964">
    <property type="component" value="Chromosome"/>
</dbReference>
<dbReference type="GO" id="GO:0003861">
    <property type="term" value="F:3-isopropylmalate dehydratase activity"/>
    <property type="evidence" value="ECO:0007669"/>
    <property type="project" value="UniProtKB-UniRule"/>
</dbReference>
<dbReference type="GO" id="GO:0051539">
    <property type="term" value="F:4 iron, 4 sulfur cluster binding"/>
    <property type="evidence" value="ECO:0007669"/>
    <property type="project" value="UniProtKB-KW"/>
</dbReference>
<dbReference type="GO" id="GO:0046872">
    <property type="term" value="F:metal ion binding"/>
    <property type="evidence" value="ECO:0007669"/>
    <property type="project" value="UniProtKB-KW"/>
</dbReference>
<dbReference type="GO" id="GO:0009098">
    <property type="term" value="P:L-leucine biosynthetic process"/>
    <property type="evidence" value="ECO:0007669"/>
    <property type="project" value="UniProtKB-UniRule"/>
</dbReference>
<dbReference type="CDD" id="cd01583">
    <property type="entry name" value="IPMI"/>
    <property type="match status" value="1"/>
</dbReference>
<dbReference type="FunFam" id="3.30.499.10:FF:000007">
    <property type="entry name" value="3-isopropylmalate dehydratase large subunit"/>
    <property type="match status" value="1"/>
</dbReference>
<dbReference type="Gene3D" id="3.30.499.10">
    <property type="entry name" value="Aconitase, domain 3"/>
    <property type="match status" value="2"/>
</dbReference>
<dbReference type="HAMAP" id="MF_01026">
    <property type="entry name" value="LeuC_type1"/>
    <property type="match status" value="1"/>
</dbReference>
<dbReference type="InterPro" id="IPR004430">
    <property type="entry name" value="3-IsopropMal_deHydase_lsu"/>
</dbReference>
<dbReference type="InterPro" id="IPR015931">
    <property type="entry name" value="Acnase/IPM_dHydase_lsu_aba_1/3"/>
</dbReference>
<dbReference type="InterPro" id="IPR001030">
    <property type="entry name" value="Acoase/IPM_deHydtase_lsu_aba"/>
</dbReference>
<dbReference type="InterPro" id="IPR018136">
    <property type="entry name" value="Aconitase_4Fe-4S_BS"/>
</dbReference>
<dbReference type="InterPro" id="IPR036008">
    <property type="entry name" value="Aconitase_4Fe-4S_dom"/>
</dbReference>
<dbReference type="InterPro" id="IPR050067">
    <property type="entry name" value="IPM_dehydratase_rel_enz"/>
</dbReference>
<dbReference type="InterPro" id="IPR033941">
    <property type="entry name" value="IPMI_cat"/>
</dbReference>
<dbReference type="NCBIfam" id="TIGR00170">
    <property type="entry name" value="leuC"/>
    <property type="match status" value="1"/>
</dbReference>
<dbReference type="NCBIfam" id="NF004016">
    <property type="entry name" value="PRK05478.1"/>
    <property type="match status" value="1"/>
</dbReference>
<dbReference type="NCBIfam" id="NF009116">
    <property type="entry name" value="PRK12466.1"/>
    <property type="match status" value="1"/>
</dbReference>
<dbReference type="PANTHER" id="PTHR43822:SF9">
    <property type="entry name" value="3-ISOPROPYLMALATE DEHYDRATASE"/>
    <property type="match status" value="1"/>
</dbReference>
<dbReference type="PANTHER" id="PTHR43822">
    <property type="entry name" value="HOMOACONITASE, MITOCHONDRIAL-RELATED"/>
    <property type="match status" value="1"/>
</dbReference>
<dbReference type="Pfam" id="PF00330">
    <property type="entry name" value="Aconitase"/>
    <property type="match status" value="1"/>
</dbReference>
<dbReference type="PRINTS" id="PR00415">
    <property type="entry name" value="ACONITASE"/>
</dbReference>
<dbReference type="SUPFAM" id="SSF53732">
    <property type="entry name" value="Aconitase iron-sulfur domain"/>
    <property type="match status" value="1"/>
</dbReference>
<dbReference type="PROSITE" id="PS00450">
    <property type="entry name" value="ACONITASE_1"/>
    <property type="match status" value="1"/>
</dbReference>
<dbReference type="PROSITE" id="PS01244">
    <property type="entry name" value="ACONITASE_2"/>
    <property type="match status" value="1"/>
</dbReference>
<feature type="chain" id="PRO_0000319818" description="3-isopropylmalate dehydratase large subunit">
    <location>
        <begin position="1"/>
        <end position="481"/>
    </location>
</feature>
<feature type="binding site" evidence="1">
    <location>
        <position position="357"/>
    </location>
    <ligand>
        <name>[4Fe-4S] cluster</name>
        <dbReference type="ChEBI" id="CHEBI:49883"/>
    </ligand>
</feature>
<feature type="binding site" evidence="1">
    <location>
        <position position="417"/>
    </location>
    <ligand>
        <name>[4Fe-4S] cluster</name>
        <dbReference type="ChEBI" id="CHEBI:49883"/>
    </ligand>
</feature>
<feature type="binding site" evidence="1">
    <location>
        <position position="420"/>
    </location>
    <ligand>
        <name>[4Fe-4S] cluster</name>
        <dbReference type="ChEBI" id="CHEBI:49883"/>
    </ligand>
</feature>
<reference key="1">
    <citation type="submission" date="2006-08" db="EMBL/GenBank/DDBJ databases">
        <title>Complete sequence of Maricaulis maris MCS10.</title>
        <authorList>
            <consortium name="US DOE Joint Genome Institute"/>
            <person name="Copeland A."/>
            <person name="Lucas S."/>
            <person name="Lapidus A."/>
            <person name="Barry K."/>
            <person name="Detter J.C."/>
            <person name="Glavina del Rio T."/>
            <person name="Hammon N."/>
            <person name="Israni S."/>
            <person name="Dalin E."/>
            <person name="Tice H."/>
            <person name="Pitluck S."/>
            <person name="Saunders E."/>
            <person name="Brettin T."/>
            <person name="Bruce D."/>
            <person name="Han C."/>
            <person name="Tapia R."/>
            <person name="Gilna P."/>
            <person name="Schmutz J."/>
            <person name="Larimer F."/>
            <person name="Land M."/>
            <person name="Hauser L."/>
            <person name="Kyrpides N."/>
            <person name="Mikhailova N."/>
            <person name="Viollier P."/>
            <person name="Stephens C."/>
            <person name="Richardson P."/>
        </authorList>
    </citation>
    <scope>NUCLEOTIDE SEQUENCE [LARGE SCALE GENOMIC DNA]</scope>
    <source>
        <strain>MCS10</strain>
    </source>
</reference>
<name>LEUC_MARMM</name>
<keyword id="KW-0004">4Fe-4S</keyword>
<keyword id="KW-0028">Amino-acid biosynthesis</keyword>
<keyword id="KW-0100">Branched-chain amino acid biosynthesis</keyword>
<keyword id="KW-0408">Iron</keyword>
<keyword id="KW-0411">Iron-sulfur</keyword>
<keyword id="KW-0432">Leucine biosynthesis</keyword>
<keyword id="KW-0456">Lyase</keyword>
<keyword id="KW-0479">Metal-binding</keyword>
<keyword id="KW-1185">Reference proteome</keyword>
<accession>Q0AT09</accession>
<protein>
    <recommendedName>
        <fullName evidence="1">3-isopropylmalate dehydratase large subunit</fullName>
        <ecNumber evidence="1">4.2.1.33</ecNumber>
    </recommendedName>
    <alternativeName>
        <fullName evidence="1">Alpha-IPM isomerase</fullName>
        <shortName evidence="1">IPMI</shortName>
    </alternativeName>
    <alternativeName>
        <fullName evidence="1">Isopropylmalate isomerase</fullName>
    </alternativeName>
</protein>
<organism>
    <name type="scientific">Maricaulis maris (strain MCS10)</name>
    <name type="common">Caulobacter maris</name>
    <dbReference type="NCBI Taxonomy" id="394221"/>
    <lineage>
        <taxon>Bacteria</taxon>
        <taxon>Pseudomonadati</taxon>
        <taxon>Pseudomonadota</taxon>
        <taxon>Alphaproteobacteria</taxon>
        <taxon>Maricaulales</taxon>
        <taxon>Maricaulaceae</taxon>
        <taxon>Maricaulis</taxon>
    </lineage>
</organism>
<comment type="function">
    <text evidence="1">Catalyzes the isomerization between 2-isopropylmalate and 3-isopropylmalate, via the formation of 2-isopropylmaleate.</text>
</comment>
<comment type="catalytic activity">
    <reaction evidence="1">
        <text>(2R,3S)-3-isopropylmalate = (2S)-2-isopropylmalate</text>
        <dbReference type="Rhea" id="RHEA:32287"/>
        <dbReference type="ChEBI" id="CHEBI:1178"/>
        <dbReference type="ChEBI" id="CHEBI:35121"/>
        <dbReference type="EC" id="4.2.1.33"/>
    </reaction>
</comment>
<comment type="cofactor">
    <cofactor evidence="1">
        <name>[4Fe-4S] cluster</name>
        <dbReference type="ChEBI" id="CHEBI:49883"/>
    </cofactor>
    <text evidence="1">Binds 1 [4Fe-4S] cluster per subunit.</text>
</comment>
<comment type="pathway">
    <text evidence="1">Amino-acid biosynthesis; L-leucine biosynthesis; L-leucine from 3-methyl-2-oxobutanoate: step 2/4.</text>
</comment>
<comment type="subunit">
    <text evidence="1">Heterodimer of LeuC and LeuD.</text>
</comment>
<comment type="similarity">
    <text evidence="1">Belongs to the aconitase/IPM isomerase family. LeuC type 1 subfamily.</text>
</comment>
<evidence type="ECO:0000255" key="1">
    <source>
        <dbReference type="HAMAP-Rule" id="MF_01026"/>
    </source>
</evidence>
<gene>
    <name evidence="1" type="primary">leuC</name>
    <name type="ordered locus">Mmar10_0285</name>
</gene>